<keyword id="KW-0067">ATP-binding</keyword>
<keyword id="KW-0963">Cytoplasm</keyword>
<keyword id="KW-0436">Ligase</keyword>
<keyword id="KW-0547">Nucleotide-binding</keyword>
<keyword id="KW-0658">Purine biosynthesis</keyword>
<organism>
    <name type="scientific">Pyrococcus horikoshii (strain ATCC 700860 / DSM 12428 / JCM 9974 / NBRC 100139 / OT-3)</name>
    <dbReference type="NCBI Taxonomy" id="70601"/>
    <lineage>
        <taxon>Archaea</taxon>
        <taxon>Methanobacteriati</taxon>
        <taxon>Methanobacteriota</taxon>
        <taxon>Thermococci</taxon>
        <taxon>Thermococcales</taxon>
        <taxon>Thermococcaceae</taxon>
        <taxon>Pyrococcus</taxon>
    </lineage>
</organism>
<sequence length="334" mass="36919">MLTYAQAGVDEEKTAKALRAIIDAARRTFKFRMNKIGEPGDIGHYSALLDFKDFYLAITTDGVGTKILVAEAVNKFDTIGIDMIAMNVNDLICVGAEPVALVDYLAVKEPNEDVFQQIAKGLYEGAKEAGIAIVGGETAVMPDLINGYDLAGTAVGIVEKDKVVTGEKIKPDDIVIGISSSGIHSNGLTLARKLLIPKYGLDYEYNGKKLWEWLLEPTRIYVKPILKLINEVEVHGLAHITGGGLLNLKRLTKYGFELEMPPIDGIFKLIYENGVPLEEMFRVFNMGVGFMVIVPQEEKENALQILNKYYESFELGKVIKEPEKIKVKNYGITL</sequence>
<accession>O58054</accession>
<proteinExistence type="inferred from homology"/>
<protein>
    <recommendedName>
        <fullName evidence="1">Phosphoribosylformylglycinamidine cyclo-ligase</fullName>
        <ecNumber evidence="1">6.3.3.1</ecNumber>
    </recommendedName>
    <alternativeName>
        <fullName evidence="1">AIR synthase</fullName>
    </alternativeName>
    <alternativeName>
        <fullName evidence="1">AIRS</fullName>
    </alternativeName>
    <alternativeName>
        <fullName evidence="1">Phosphoribosyl-aminoimidazole synthetase</fullName>
    </alternativeName>
</protein>
<reference key="1">
    <citation type="journal article" date="1998" name="DNA Res.">
        <title>Complete sequence and gene organization of the genome of a hyper-thermophilic archaebacterium, Pyrococcus horikoshii OT3.</title>
        <authorList>
            <person name="Kawarabayasi Y."/>
            <person name="Sawada M."/>
            <person name="Horikawa H."/>
            <person name="Haikawa Y."/>
            <person name="Hino Y."/>
            <person name="Yamamoto S."/>
            <person name="Sekine M."/>
            <person name="Baba S."/>
            <person name="Kosugi H."/>
            <person name="Hosoyama A."/>
            <person name="Nagai Y."/>
            <person name="Sakai M."/>
            <person name="Ogura K."/>
            <person name="Otsuka R."/>
            <person name="Nakazawa H."/>
            <person name="Takamiya M."/>
            <person name="Ohfuku Y."/>
            <person name="Funahashi T."/>
            <person name="Tanaka T."/>
            <person name="Kudoh Y."/>
            <person name="Yamazaki J."/>
            <person name="Kushida N."/>
            <person name="Oguchi A."/>
            <person name="Aoki K."/>
            <person name="Yoshizawa T."/>
            <person name="Nakamura Y."/>
            <person name="Robb F.T."/>
            <person name="Horikoshi K."/>
            <person name="Masuchi Y."/>
            <person name="Shizuya H."/>
            <person name="Kikuchi H."/>
        </authorList>
    </citation>
    <scope>NUCLEOTIDE SEQUENCE [LARGE SCALE GENOMIC DNA]</scope>
    <source>
        <strain>ATCC 700860 / DSM 12428 / JCM 9974 / NBRC 100139 / OT-3</strain>
    </source>
</reference>
<evidence type="ECO:0000255" key="1">
    <source>
        <dbReference type="HAMAP-Rule" id="MF_00741"/>
    </source>
</evidence>
<feature type="chain" id="PRO_0000148287" description="Phosphoribosylformylglycinamidine cyclo-ligase">
    <location>
        <begin position="1"/>
        <end position="334"/>
    </location>
</feature>
<gene>
    <name evidence="1" type="primary">purM</name>
    <name type="ordered locus">PH0316</name>
</gene>
<dbReference type="EC" id="6.3.3.1" evidence="1"/>
<dbReference type="EMBL" id="BA000001">
    <property type="protein sequence ID" value="BAA29389.1"/>
    <property type="molecule type" value="Genomic_DNA"/>
</dbReference>
<dbReference type="PIR" id="F71457">
    <property type="entry name" value="F71457"/>
</dbReference>
<dbReference type="RefSeq" id="WP_010884407.1">
    <property type="nucleotide sequence ID" value="NC_000961.1"/>
</dbReference>
<dbReference type="SMR" id="O58054"/>
<dbReference type="STRING" id="70601.gene:9377234"/>
<dbReference type="EnsemblBacteria" id="BAA29389">
    <property type="protein sequence ID" value="BAA29389"/>
    <property type="gene ID" value="BAA29389"/>
</dbReference>
<dbReference type="GeneID" id="1444194"/>
<dbReference type="KEGG" id="pho:PH0316"/>
<dbReference type="eggNOG" id="arCOG00639">
    <property type="taxonomic scope" value="Archaea"/>
</dbReference>
<dbReference type="OrthoDB" id="6605at2157"/>
<dbReference type="BRENDA" id="6.3.3.1">
    <property type="organism ID" value="5244"/>
</dbReference>
<dbReference type="UniPathway" id="UPA00074">
    <property type="reaction ID" value="UER00129"/>
</dbReference>
<dbReference type="Proteomes" id="UP000000752">
    <property type="component" value="Chromosome"/>
</dbReference>
<dbReference type="GO" id="GO:0005829">
    <property type="term" value="C:cytosol"/>
    <property type="evidence" value="ECO:0007669"/>
    <property type="project" value="TreeGrafter"/>
</dbReference>
<dbReference type="GO" id="GO:0005524">
    <property type="term" value="F:ATP binding"/>
    <property type="evidence" value="ECO:0007669"/>
    <property type="project" value="UniProtKB-KW"/>
</dbReference>
<dbReference type="GO" id="GO:0004637">
    <property type="term" value="F:phosphoribosylamine-glycine ligase activity"/>
    <property type="evidence" value="ECO:0007669"/>
    <property type="project" value="TreeGrafter"/>
</dbReference>
<dbReference type="GO" id="GO:0004641">
    <property type="term" value="F:phosphoribosylformylglycinamidine cyclo-ligase activity"/>
    <property type="evidence" value="ECO:0007669"/>
    <property type="project" value="UniProtKB-UniRule"/>
</dbReference>
<dbReference type="GO" id="GO:0006189">
    <property type="term" value="P:'de novo' IMP biosynthetic process"/>
    <property type="evidence" value="ECO:0007669"/>
    <property type="project" value="UniProtKB-UniRule"/>
</dbReference>
<dbReference type="GO" id="GO:0046084">
    <property type="term" value="P:adenine biosynthetic process"/>
    <property type="evidence" value="ECO:0007669"/>
    <property type="project" value="TreeGrafter"/>
</dbReference>
<dbReference type="CDD" id="cd02196">
    <property type="entry name" value="PurM"/>
    <property type="match status" value="1"/>
</dbReference>
<dbReference type="FunFam" id="3.30.1330.10:FF:000020">
    <property type="entry name" value="Phosphoribosylformylglycinamidine cyclo-ligase"/>
    <property type="match status" value="1"/>
</dbReference>
<dbReference type="FunFam" id="3.90.650.10:FF:000011">
    <property type="entry name" value="Phosphoribosylformylglycinamidine cyclo-ligase"/>
    <property type="match status" value="1"/>
</dbReference>
<dbReference type="Gene3D" id="3.90.650.10">
    <property type="entry name" value="PurM-like C-terminal domain"/>
    <property type="match status" value="1"/>
</dbReference>
<dbReference type="Gene3D" id="3.30.1330.10">
    <property type="entry name" value="PurM-like, N-terminal domain"/>
    <property type="match status" value="1"/>
</dbReference>
<dbReference type="HAMAP" id="MF_00741">
    <property type="entry name" value="AIRS"/>
    <property type="match status" value="1"/>
</dbReference>
<dbReference type="InterPro" id="IPR010918">
    <property type="entry name" value="PurM-like_C_dom"/>
</dbReference>
<dbReference type="InterPro" id="IPR036676">
    <property type="entry name" value="PurM-like_C_sf"/>
</dbReference>
<dbReference type="InterPro" id="IPR016188">
    <property type="entry name" value="PurM-like_N"/>
</dbReference>
<dbReference type="InterPro" id="IPR036921">
    <property type="entry name" value="PurM-like_N_sf"/>
</dbReference>
<dbReference type="InterPro" id="IPR004733">
    <property type="entry name" value="PurM_cligase"/>
</dbReference>
<dbReference type="NCBIfam" id="TIGR00878">
    <property type="entry name" value="purM"/>
    <property type="match status" value="1"/>
</dbReference>
<dbReference type="PANTHER" id="PTHR10520:SF12">
    <property type="entry name" value="TRIFUNCTIONAL PURINE BIOSYNTHETIC PROTEIN ADENOSINE-3"/>
    <property type="match status" value="1"/>
</dbReference>
<dbReference type="PANTHER" id="PTHR10520">
    <property type="entry name" value="TRIFUNCTIONAL PURINE BIOSYNTHETIC PROTEIN ADENOSINE-3-RELATED"/>
    <property type="match status" value="1"/>
</dbReference>
<dbReference type="Pfam" id="PF00586">
    <property type="entry name" value="AIRS"/>
    <property type="match status" value="1"/>
</dbReference>
<dbReference type="Pfam" id="PF02769">
    <property type="entry name" value="AIRS_C"/>
    <property type="match status" value="1"/>
</dbReference>
<dbReference type="SUPFAM" id="SSF56042">
    <property type="entry name" value="PurM C-terminal domain-like"/>
    <property type="match status" value="1"/>
</dbReference>
<dbReference type="SUPFAM" id="SSF55326">
    <property type="entry name" value="PurM N-terminal domain-like"/>
    <property type="match status" value="1"/>
</dbReference>
<comment type="catalytic activity">
    <reaction evidence="1">
        <text>2-formamido-N(1)-(5-O-phospho-beta-D-ribosyl)acetamidine + ATP = 5-amino-1-(5-phospho-beta-D-ribosyl)imidazole + ADP + phosphate + H(+)</text>
        <dbReference type="Rhea" id="RHEA:23032"/>
        <dbReference type="ChEBI" id="CHEBI:15378"/>
        <dbReference type="ChEBI" id="CHEBI:30616"/>
        <dbReference type="ChEBI" id="CHEBI:43474"/>
        <dbReference type="ChEBI" id="CHEBI:137981"/>
        <dbReference type="ChEBI" id="CHEBI:147287"/>
        <dbReference type="ChEBI" id="CHEBI:456216"/>
        <dbReference type="EC" id="6.3.3.1"/>
    </reaction>
</comment>
<comment type="pathway">
    <text evidence="1">Purine metabolism; IMP biosynthesis via de novo pathway; 5-amino-1-(5-phospho-D-ribosyl)imidazole from N(2)-formyl-N(1)-(5-phospho-D-ribosyl)glycinamide: step 2/2.</text>
</comment>
<comment type="subcellular location">
    <subcellularLocation>
        <location evidence="1">Cytoplasm</location>
    </subcellularLocation>
</comment>
<comment type="similarity">
    <text evidence="1">Belongs to the AIR synthase family.</text>
</comment>
<name>PUR5_PYRHO</name>